<feature type="signal peptide" evidence="3">
    <location>
        <begin position="1"/>
        <end position="28"/>
    </location>
</feature>
<feature type="chain" id="PRO_0000006052" description="Cytochrome c oxidase subunit 2" evidence="3">
    <location>
        <begin position="29"/>
        <end position="362"/>
    </location>
</feature>
<feature type="transmembrane region" description="Helical" evidence="2">
    <location>
        <begin position="60"/>
        <end position="80"/>
    </location>
</feature>
<feature type="transmembrane region" description="Helical" evidence="2">
    <location>
        <begin position="107"/>
        <end position="127"/>
    </location>
</feature>
<feature type="region of interest" description="Disordered" evidence="4">
    <location>
        <begin position="171"/>
        <end position="206"/>
    </location>
</feature>
<feature type="region of interest" description="Disordered" evidence="4">
    <location>
        <begin position="325"/>
        <end position="362"/>
    </location>
</feature>
<feature type="compositionally biased region" description="Basic and acidic residues" evidence="4">
    <location>
        <begin position="176"/>
        <end position="191"/>
    </location>
</feature>
<feature type="compositionally biased region" description="Polar residues" evidence="4">
    <location>
        <begin position="197"/>
        <end position="206"/>
    </location>
</feature>
<feature type="binding site" evidence="1">
    <location>
        <position position="246"/>
    </location>
    <ligand>
        <name>Cu cation</name>
        <dbReference type="ChEBI" id="CHEBI:23378"/>
        <label>A1</label>
    </ligand>
</feature>
<feature type="binding site" evidence="1">
    <location>
        <position position="287"/>
    </location>
    <ligand>
        <name>Cu cation</name>
        <dbReference type="ChEBI" id="CHEBI:23378"/>
        <label>A1</label>
    </ligand>
</feature>
<feature type="binding site" evidence="1">
    <location>
        <position position="287"/>
    </location>
    <ligand>
        <name>Cu cation</name>
        <dbReference type="ChEBI" id="CHEBI:23378"/>
        <label>A2</label>
    </ligand>
</feature>
<feature type="binding site" evidence="1">
    <location>
        <position position="289"/>
    </location>
    <ligand>
        <name>Cu cation</name>
        <dbReference type="ChEBI" id="CHEBI:23378"/>
        <label>A2</label>
    </ligand>
</feature>
<feature type="binding site" evidence="1">
    <location>
        <position position="291"/>
    </location>
    <ligand>
        <name>Cu cation</name>
        <dbReference type="ChEBI" id="CHEBI:23378"/>
        <label>A1</label>
    </ligand>
</feature>
<feature type="binding site" evidence="1">
    <location>
        <position position="291"/>
    </location>
    <ligand>
        <name>Cu cation</name>
        <dbReference type="ChEBI" id="CHEBI:23378"/>
        <label>A2</label>
    </ligand>
</feature>
<feature type="binding site" evidence="1">
    <location>
        <position position="295"/>
    </location>
    <ligand>
        <name>Cu cation</name>
        <dbReference type="ChEBI" id="CHEBI:23378"/>
        <label>A2</label>
    </ligand>
</feature>
<feature type="binding site" evidence="1">
    <location>
        <position position="298"/>
    </location>
    <ligand>
        <name>Cu cation</name>
        <dbReference type="ChEBI" id="CHEBI:23378"/>
        <label>A1</label>
    </ligand>
</feature>
<feature type="lipid moiety-binding region" description="N-palmitoyl cysteine" evidence="3">
    <location>
        <position position="29"/>
    </location>
</feature>
<feature type="lipid moiety-binding region" description="S-diacylglycerol cysteine" evidence="3">
    <location>
        <position position="29"/>
    </location>
</feature>
<accession>Q6NG98</accession>
<reference key="1">
    <citation type="journal article" date="2003" name="Nucleic Acids Res.">
        <title>The complete genome sequence and analysis of Corynebacterium diphtheriae NCTC13129.</title>
        <authorList>
            <person name="Cerdeno-Tarraga A.-M."/>
            <person name="Efstratiou A."/>
            <person name="Dover L.G."/>
            <person name="Holden M.T.G."/>
            <person name="Pallen M.J."/>
            <person name="Bentley S.D."/>
            <person name="Besra G.S."/>
            <person name="Churcher C.M."/>
            <person name="James K.D."/>
            <person name="De Zoysa A."/>
            <person name="Chillingworth T."/>
            <person name="Cronin A."/>
            <person name="Dowd L."/>
            <person name="Feltwell T."/>
            <person name="Hamlin N."/>
            <person name="Holroyd S."/>
            <person name="Jagels K."/>
            <person name="Moule S."/>
            <person name="Quail M.A."/>
            <person name="Rabbinowitsch E."/>
            <person name="Rutherford K.M."/>
            <person name="Thomson N.R."/>
            <person name="Unwin L."/>
            <person name="Whitehead S."/>
            <person name="Barrell B.G."/>
            <person name="Parkhill J."/>
        </authorList>
    </citation>
    <scope>NUCLEOTIDE SEQUENCE [LARGE SCALE GENOMIC DNA]</scope>
    <source>
        <strain>ATCC 700971 / NCTC 13129 / Biotype gravis</strain>
    </source>
</reference>
<evidence type="ECO:0000250" key="1"/>
<evidence type="ECO:0000255" key="2"/>
<evidence type="ECO:0000255" key="3">
    <source>
        <dbReference type="PROSITE-ProRule" id="PRU00303"/>
    </source>
</evidence>
<evidence type="ECO:0000256" key="4">
    <source>
        <dbReference type="SAM" id="MobiDB-lite"/>
    </source>
</evidence>
<evidence type="ECO:0000305" key="5"/>
<dbReference type="EC" id="7.1.1.9"/>
<dbReference type="EMBL" id="BX248358">
    <property type="protein sequence ID" value="CAE50154.1"/>
    <property type="molecule type" value="Genomic_DNA"/>
</dbReference>
<dbReference type="RefSeq" id="WP_003852218.1">
    <property type="nucleotide sequence ID" value="NC_002935.2"/>
</dbReference>
<dbReference type="SMR" id="Q6NG98"/>
<dbReference type="STRING" id="257309.DIP1629"/>
<dbReference type="KEGG" id="cdi:DIP1629"/>
<dbReference type="HOGENOM" id="CLU_036876_3_1_11"/>
<dbReference type="Proteomes" id="UP000002198">
    <property type="component" value="Chromosome"/>
</dbReference>
<dbReference type="GO" id="GO:0005886">
    <property type="term" value="C:plasma membrane"/>
    <property type="evidence" value="ECO:0007669"/>
    <property type="project" value="UniProtKB-SubCell"/>
</dbReference>
<dbReference type="GO" id="GO:0005507">
    <property type="term" value="F:copper ion binding"/>
    <property type="evidence" value="ECO:0007669"/>
    <property type="project" value="InterPro"/>
</dbReference>
<dbReference type="GO" id="GO:0004129">
    <property type="term" value="F:cytochrome-c oxidase activity"/>
    <property type="evidence" value="ECO:0007669"/>
    <property type="project" value="UniProtKB-EC"/>
</dbReference>
<dbReference type="GO" id="GO:0042773">
    <property type="term" value="P:ATP synthesis coupled electron transport"/>
    <property type="evidence" value="ECO:0007669"/>
    <property type="project" value="TreeGrafter"/>
</dbReference>
<dbReference type="Gene3D" id="1.10.287.90">
    <property type="match status" value="1"/>
</dbReference>
<dbReference type="Gene3D" id="2.60.40.420">
    <property type="entry name" value="Cupredoxins - blue copper proteins"/>
    <property type="match status" value="1"/>
</dbReference>
<dbReference type="InterPro" id="IPR045187">
    <property type="entry name" value="CcO_II"/>
</dbReference>
<dbReference type="InterPro" id="IPR002429">
    <property type="entry name" value="CcO_II-like_C"/>
</dbReference>
<dbReference type="InterPro" id="IPR001505">
    <property type="entry name" value="Copper_CuA"/>
</dbReference>
<dbReference type="InterPro" id="IPR008972">
    <property type="entry name" value="Cupredoxin"/>
</dbReference>
<dbReference type="InterPro" id="IPR036257">
    <property type="entry name" value="Cyt_c_oxidase_su2_TM_sf"/>
</dbReference>
<dbReference type="PANTHER" id="PTHR22888:SF9">
    <property type="entry name" value="CYTOCHROME C OXIDASE SUBUNIT 2"/>
    <property type="match status" value="1"/>
</dbReference>
<dbReference type="PANTHER" id="PTHR22888">
    <property type="entry name" value="CYTOCHROME C OXIDASE, SUBUNIT II"/>
    <property type="match status" value="1"/>
</dbReference>
<dbReference type="Pfam" id="PF00116">
    <property type="entry name" value="COX2"/>
    <property type="match status" value="1"/>
</dbReference>
<dbReference type="PRINTS" id="PR01166">
    <property type="entry name" value="CYCOXIDASEII"/>
</dbReference>
<dbReference type="SUPFAM" id="SSF49503">
    <property type="entry name" value="Cupredoxins"/>
    <property type="match status" value="1"/>
</dbReference>
<dbReference type="SUPFAM" id="SSF81464">
    <property type="entry name" value="Cytochrome c oxidase subunit II-like, transmembrane region"/>
    <property type="match status" value="1"/>
</dbReference>
<dbReference type="PROSITE" id="PS00078">
    <property type="entry name" value="COX2"/>
    <property type="match status" value="1"/>
</dbReference>
<dbReference type="PROSITE" id="PS50857">
    <property type="entry name" value="COX2_CUA"/>
    <property type="match status" value="1"/>
</dbReference>
<dbReference type="PROSITE" id="PS51257">
    <property type="entry name" value="PROKAR_LIPOPROTEIN"/>
    <property type="match status" value="1"/>
</dbReference>
<gene>
    <name type="primary">ctaC</name>
    <name type="ordered locus">DIP1629</name>
</gene>
<organism>
    <name type="scientific">Corynebacterium diphtheriae (strain ATCC 700971 / NCTC 13129 / Biotype gravis)</name>
    <dbReference type="NCBI Taxonomy" id="257309"/>
    <lineage>
        <taxon>Bacteria</taxon>
        <taxon>Bacillati</taxon>
        <taxon>Actinomycetota</taxon>
        <taxon>Actinomycetes</taxon>
        <taxon>Mycobacteriales</taxon>
        <taxon>Corynebacteriaceae</taxon>
        <taxon>Corynebacterium</taxon>
    </lineage>
</organism>
<keyword id="KW-1003">Cell membrane</keyword>
<keyword id="KW-0186">Copper</keyword>
<keyword id="KW-0249">Electron transport</keyword>
<keyword id="KW-0449">Lipoprotein</keyword>
<keyword id="KW-0472">Membrane</keyword>
<keyword id="KW-0479">Metal-binding</keyword>
<keyword id="KW-0564">Palmitate</keyword>
<keyword id="KW-1185">Reference proteome</keyword>
<keyword id="KW-0679">Respiratory chain</keyword>
<keyword id="KW-0732">Signal</keyword>
<keyword id="KW-1278">Translocase</keyword>
<keyword id="KW-0812">Transmembrane</keyword>
<keyword id="KW-1133">Transmembrane helix</keyword>
<keyword id="KW-0813">Transport</keyword>
<name>COX2_CORDI</name>
<sequence>MEQQEKRGTVRKALLGSVIGFGGLALAGCDVEAPGGPLGTALGFGWPKGITPEATSMYNFWVWVWVTAWIIGFIMWGLFIYGMFSWSAKRAKKAGKDEFPRQTQYNIPLELVLTIVPIIIVMALFFFTVQTQDKVTAMDKDPKVTVDVTGYQWNWKFGYAKVAGELSPTGSDYVGTDEKRQEAAEKTKFDQGGDNPNPINGRSKTDTSYLHFNKIETLGTSEEIPVLVLPSNTPVEFDLASADVSHAFWVPEFLFKRDAYNHPEQNKQQRRFQIEKIEKEGAFVGRCAEMCGTYHAMMNFEIRVVSPEKFAQYLKFRNDNPQATNSDALKSIGEAPYATSTHPFNSERATRDGANFDDTAAA</sequence>
<comment type="function">
    <text evidence="1">Subunits I and II form the functional core of the enzyme complex. Electrons originating in cytochrome c are transferred via heme a and Cu(A) to the binuclear center formed by heme a3 and Cu(B) (By similarity).</text>
</comment>
<comment type="catalytic activity">
    <reaction>
        <text>4 Fe(II)-[cytochrome c] + O2 + 8 H(+)(in) = 4 Fe(III)-[cytochrome c] + 2 H2O + 4 H(+)(out)</text>
        <dbReference type="Rhea" id="RHEA:11436"/>
        <dbReference type="Rhea" id="RHEA-COMP:10350"/>
        <dbReference type="Rhea" id="RHEA-COMP:14399"/>
        <dbReference type="ChEBI" id="CHEBI:15377"/>
        <dbReference type="ChEBI" id="CHEBI:15378"/>
        <dbReference type="ChEBI" id="CHEBI:15379"/>
        <dbReference type="ChEBI" id="CHEBI:29033"/>
        <dbReference type="ChEBI" id="CHEBI:29034"/>
        <dbReference type="EC" id="7.1.1.9"/>
    </reaction>
</comment>
<comment type="cofactor">
    <cofactor evidence="1">
        <name>binuclear copper center (CuA)</name>
        <dbReference type="ChEBI" id="CHEBI:47357"/>
    </cofactor>
    <text evidence="1">Binds a binuclear copper A center per subunit.</text>
</comment>
<comment type="subunit">
    <text evidence="1">Associates with subunits I, III and IV to form cytochrome c oxidase.</text>
</comment>
<comment type="subcellular location">
    <subcellularLocation>
        <location evidence="3">Cell membrane</location>
        <topology evidence="1">Multi-pass membrane protein</topology>
    </subcellularLocation>
</comment>
<comment type="similarity">
    <text evidence="5">Belongs to the cytochrome c oxidase subunit 2 family.</text>
</comment>
<proteinExistence type="inferred from homology"/>
<protein>
    <recommendedName>
        <fullName>Cytochrome c oxidase subunit 2</fullName>
        <ecNumber>7.1.1.9</ecNumber>
    </recommendedName>
    <alternativeName>
        <fullName>Cytochrome aa3 subunit 2</fullName>
    </alternativeName>
    <alternativeName>
        <fullName>Cytochrome c oxidase polypeptide II</fullName>
    </alternativeName>
    <alternativeName>
        <fullName>Oxidase aa(3) subunit 2</fullName>
    </alternativeName>
</protein>